<proteinExistence type="inferred from homology"/>
<dbReference type="EC" id="6.1.1.20" evidence="1"/>
<dbReference type="EMBL" id="CR628336">
    <property type="protein sequence ID" value="CAH13919.1"/>
    <property type="molecule type" value="Genomic_DNA"/>
</dbReference>
<dbReference type="SMR" id="Q5X1H7"/>
<dbReference type="KEGG" id="lpp:lpp2766"/>
<dbReference type="LegioList" id="lpp2766"/>
<dbReference type="HOGENOM" id="CLU_025086_0_1_6"/>
<dbReference type="GO" id="GO:0005737">
    <property type="term" value="C:cytoplasm"/>
    <property type="evidence" value="ECO:0007669"/>
    <property type="project" value="UniProtKB-SubCell"/>
</dbReference>
<dbReference type="GO" id="GO:0005524">
    <property type="term" value="F:ATP binding"/>
    <property type="evidence" value="ECO:0007669"/>
    <property type="project" value="UniProtKB-UniRule"/>
</dbReference>
<dbReference type="GO" id="GO:0000287">
    <property type="term" value="F:magnesium ion binding"/>
    <property type="evidence" value="ECO:0007669"/>
    <property type="project" value="UniProtKB-UniRule"/>
</dbReference>
<dbReference type="GO" id="GO:0004826">
    <property type="term" value="F:phenylalanine-tRNA ligase activity"/>
    <property type="evidence" value="ECO:0007669"/>
    <property type="project" value="UniProtKB-UniRule"/>
</dbReference>
<dbReference type="GO" id="GO:0000049">
    <property type="term" value="F:tRNA binding"/>
    <property type="evidence" value="ECO:0007669"/>
    <property type="project" value="InterPro"/>
</dbReference>
<dbReference type="GO" id="GO:0006432">
    <property type="term" value="P:phenylalanyl-tRNA aminoacylation"/>
    <property type="evidence" value="ECO:0007669"/>
    <property type="project" value="UniProtKB-UniRule"/>
</dbReference>
<dbReference type="CDD" id="cd00496">
    <property type="entry name" value="PheRS_alpha_core"/>
    <property type="match status" value="1"/>
</dbReference>
<dbReference type="FunFam" id="3.30.930.10:FF:000003">
    <property type="entry name" value="Phenylalanine--tRNA ligase alpha subunit"/>
    <property type="match status" value="1"/>
</dbReference>
<dbReference type="Gene3D" id="3.30.930.10">
    <property type="entry name" value="Bira Bifunctional Protein, Domain 2"/>
    <property type="match status" value="1"/>
</dbReference>
<dbReference type="HAMAP" id="MF_00281">
    <property type="entry name" value="Phe_tRNA_synth_alpha1"/>
    <property type="match status" value="1"/>
</dbReference>
<dbReference type="InterPro" id="IPR006195">
    <property type="entry name" value="aa-tRNA-synth_II"/>
</dbReference>
<dbReference type="InterPro" id="IPR045864">
    <property type="entry name" value="aa-tRNA-synth_II/BPL/LPL"/>
</dbReference>
<dbReference type="InterPro" id="IPR004529">
    <property type="entry name" value="Phe-tRNA-synth_IIc_asu"/>
</dbReference>
<dbReference type="InterPro" id="IPR004188">
    <property type="entry name" value="Phe-tRNA_ligase_II_N"/>
</dbReference>
<dbReference type="InterPro" id="IPR022911">
    <property type="entry name" value="Phe_tRNA_ligase_alpha1_bac"/>
</dbReference>
<dbReference type="InterPro" id="IPR002319">
    <property type="entry name" value="Phenylalanyl-tRNA_Synthase"/>
</dbReference>
<dbReference type="InterPro" id="IPR010978">
    <property type="entry name" value="tRNA-bd_arm"/>
</dbReference>
<dbReference type="NCBIfam" id="TIGR00468">
    <property type="entry name" value="pheS"/>
    <property type="match status" value="1"/>
</dbReference>
<dbReference type="PANTHER" id="PTHR11538:SF41">
    <property type="entry name" value="PHENYLALANINE--TRNA LIGASE, MITOCHONDRIAL"/>
    <property type="match status" value="1"/>
</dbReference>
<dbReference type="PANTHER" id="PTHR11538">
    <property type="entry name" value="PHENYLALANYL-TRNA SYNTHETASE"/>
    <property type="match status" value="1"/>
</dbReference>
<dbReference type="Pfam" id="PF02912">
    <property type="entry name" value="Phe_tRNA-synt_N"/>
    <property type="match status" value="1"/>
</dbReference>
<dbReference type="Pfam" id="PF01409">
    <property type="entry name" value="tRNA-synt_2d"/>
    <property type="match status" value="1"/>
</dbReference>
<dbReference type="SUPFAM" id="SSF55681">
    <property type="entry name" value="Class II aaRS and biotin synthetases"/>
    <property type="match status" value="1"/>
</dbReference>
<dbReference type="SUPFAM" id="SSF46589">
    <property type="entry name" value="tRNA-binding arm"/>
    <property type="match status" value="1"/>
</dbReference>
<dbReference type="PROSITE" id="PS50862">
    <property type="entry name" value="AA_TRNA_LIGASE_II"/>
    <property type="match status" value="1"/>
</dbReference>
<evidence type="ECO:0000255" key="1">
    <source>
        <dbReference type="HAMAP-Rule" id="MF_00281"/>
    </source>
</evidence>
<reference key="1">
    <citation type="journal article" date="2004" name="Nat. Genet.">
        <title>Evidence in the Legionella pneumophila genome for exploitation of host cell functions and high genome plasticity.</title>
        <authorList>
            <person name="Cazalet C."/>
            <person name="Rusniok C."/>
            <person name="Brueggemann H."/>
            <person name="Zidane N."/>
            <person name="Magnier A."/>
            <person name="Ma L."/>
            <person name="Tichit M."/>
            <person name="Jarraud S."/>
            <person name="Bouchier C."/>
            <person name="Vandenesch F."/>
            <person name="Kunst F."/>
            <person name="Etienne J."/>
            <person name="Glaser P."/>
            <person name="Buchrieser C."/>
        </authorList>
    </citation>
    <scope>NUCLEOTIDE SEQUENCE [LARGE SCALE GENOMIC DNA]</scope>
    <source>
        <strain>Paris</strain>
    </source>
</reference>
<sequence>MLVLINTIQEQASEAIKQATDIVALEQIRVDFLGKKGKLTELLKGLANLSAEEKPKVGQLVNQAKQGISALIETKMIELKEKQLLAKLAAEQIDVTLPGRNHSTGSLHPVTQVKHRINDYFSRLGFDIVEGPEIETEFYNFEALNIPGHHPARAMHDTFYFGDGRLLRTHTSPVQIRTMEQRKPPFRLIAPGRVYRCDSDVTHTPMFHQVEGLLIDKQATLAGLKGLLQDFFAYFFGRELALRFRPSYFPFTEPSAEVDIECTQCNGKGCRSCKFTGWLEVLGCGMVHPNVLIAVNIDPNEYHGWAFGMGMDRLAMLYYGIDDLRMLFENDLTFLRQF</sequence>
<accession>Q5X1H7</accession>
<organism>
    <name type="scientific">Legionella pneumophila (strain Paris)</name>
    <dbReference type="NCBI Taxonomy" id="297246"/>
    <lineage>
        <taxon>Bacteria</taxon>
        <taxon>Pseudomonadati</taxon>
        <taxon>Pseudomonadota</taxon>
        <taxon>Gammaproteobacteria</taxon>
        <taxon>Legionellales</taxon>
        <taxon>Legionellaceae</taxon>
        <taxon>Legionella</taxon>
    </lineage>
</organism>
<name>SYFA_LEGPA</name>
<comment type="catalytic activity">
    <reaction evidence="1">
        <text>tRNA(Phe) + L-phenylalanine + ATP = L-phenylalanyl-tRNA(Phe) + AMP + diphosphate + H(+)</text>
        <dbReference type="Rhea" id="RHEA:19413"/>
        <dbReference type="Rhea" id="RHEA-COMP:9668"/>
        <dbReference type="Rhea" id="RHEA-COMP:9699"/>
        <dbReference type="ChEBI" id="CHEBI:15378"/>
        <dbReference type="ChEBI" id="CHEBI:30616"/>
        <dbReference type="ChEBI" id="CHEBI:33019"/>
        <dbReference type="ChEBI" id="CHEBI:58095"/>
        <dbReference type="ChEBI" id="CHEBI:78442"/>
        <dbReference type="ChEBI" id="CHEBI:78531"/>
        <dbReference type="ChEBI" id="CHEBI:456215"/>
        <dbReference type="EC" id="6.1.1.20"/>
    </reaction>
</comment>
<comment type="cofactor">
    <cofactor evidence="1">
        <name>Mg(2+)</name>
        <dbReference type="ChEBI" id="CHEBI:18420"/>
    </cofactor>
    <text evidence="1">Binds 2 magnesium ions per tetramer.</text>
</comment>
<comment type="subunit">
    <text evidence="1">Tetramer of two alpha and two beta subunits.</text>
</comment>
<comment type="subcellular location">
    <subcellularLocation>
        <location evidence="1">Cytoplasm</location>
    </subcellularLocation>
</comment>
<comment type="similarity">
    <text evidence="1">Belongs to the class-II aminoacyl-tRNA synthetase family. Phe-tRNA synthetase alpha subunit type 1 subfamily.</text>
</comment>
<protein>
    <recommendedName>
        <fullName evidence="1">Phenylalanine--tRNA ligase alpha subunit</fullName>
        <ecNumber evidence="1">6.1.1.20</ecNumber>
    </recommendedName>
    <alternativeName>
        <fullName evidence="1">Phenylalanyl-tRNA synthetase alpha subunit</fullName>
        <shortName evidence="1">PheRS</shortName>
    </alternativeName>
</protein>
<keyword id="KW-0030">Aminoacyl-tRNA synthetase</keyword>
<keyword id="KW-0067">ATP-binding</keyword>
<keyword id="KW-0963">Cytoplasm</keyword>
<keyword id="KW-0436">Ligase</keyword>
<keyword id="KW-0460">Magnesium</keyword>
<keyword id="KW-0479">Metal-binding</keyword>
<keyword id="KW-0547">Nucleotide-binding</keyword>
<keyword id="KW-0648">Protein biosynthesis</keyword>
<feature type="chain" id="PRO_0000231990" description="Phenylalanine--tRNA ligase alpha subunit">
    <location>
        <begin position="1"/>
        <end position="338"/>
    </location>
</feature>
<feature type="binding site" evidence="1">
    <location>
        <position position="253"/>
    </location>
    <ligand>
        <name>Mg(2+)</name>
        <dbReference type="ChEBI" id="CHEBI:18420"/>
        <note>shared with beta subunit</note>
    </ligand>
</feature>
<gene>
    <name evidence="1" type="primary">pheS</name>
    <name type="ordered locus">lpp2766</name>
</gene>